<dbReference type="EMBL" id="AM180088">
    <property type="protein sequence ID" value="CAJ52934.1"/>
    <property type="molecule type" value="Genomic_DNA"/>
</dbReference>
<dbReference type="RefSeq" id="WP_011572047.1">
    <property type="nucleotide sequence ID" value="NC_008212.1"/>
</dbReference>
<dbReference type="SMR" id="Q18GG4"/>
<dbReference type="STRING" id="362976.HQ_2827A"/>
<dbReference type="GeneID" id="4194667"/>
<dbReference type="KEGG" id="hwa:HQ_2827A"/>
<dbReference type="eggNOG" id="arCOG04091">
    <property type="taxonomic scope" value="Archaea"/>
</dbReference>
<dbReference type="HOGENOM" id="CLU_098428_1_1_2"/>
<dbReference type="Proteomes" id="UP000001975">
    <property type="component" value="Chromosome"/>
</dbReference>
<dbReference type="GO" id="GO:1990904">
    <property type="term" value="C:ribonucleoprotein complex"/>
    <property type="evidence" value="ECO:0007669"/>
    <property type="project" value="UniProtKB-KW"/>
</dbReference>
<dbReference type="GO" id="GO:0005840">
    <property type="term" value="C:ribosome"/>
    <property type="evidence" value="ECO:0007669"/>
    <property type="project" value="UniProtKB-KW"/>
</dbReference>
<dbReference type="GO" id="GO:0019843">
    <property type="term" value="F:rRNA binding"/>
    <property type="evidence" value="ECO:0007669"/>
    <property type="project" value="UniProtKB-UniRule"/>
</dbReference>
<dbReference type="GO" id="GO:0003735">
    <property type="term" value="F:structural constituent of ribosome"/>
    <property type="evidence" value="ECO:0007669"/>
    <property type="project" value="InterPro"/>
</dbReference>
<dbReference type="GO" id="GO:0006412">
    <property type="term" value="P:translation"/>
    <property type="evidence" value="ECO:0007669"/>
    <property type="project" value="UniProtKB-UniRule"/>
</dbReference>
<dbReference type="FunFam" id="3.30.1490.10:FF:000002">
    <property type="entry name" value="40S ribosomal protein S15a"/>
    <property type="match status" value="1"/>
</dbReference>
<dbReference type="Gene3D" id="3.30.1370.30">
    <property type="match status" value="1"/>
</dbReference>
<dbReference type="Gene3D" id="3.30.1490.10">
    <property type="match status" value="1"/>
</dbReference>
<dbReference type="HAMAP" id="MF_01302_A">
    <property type="entry name" value="Ribosomal_uS8_A"/>
    <property type="match status" value="1"/>
</dbReference>
<dbReference type="InterPro" id="IPR000630">
    <property type="entry name" value="Ribosomal_uS8"/>
</dbReference>
<dbReference type="InterPro" id="IPR047863">
    <property type="entry name" value="Ribosomal_uS8_CS"/>
</dbReference>
<dbReference type="InterPro" id="IPR035987">
    <property type="entry name" value="Ribosomal_uS8_sf"/>
</dbReference>
<dbReference type="NCBIfam" id="NF003115">
    <property type="entry name" value="PRK04034.1"/>
    <property type="match status" value="1"/>
</dbReference>
<dbReference type="PANTHER" id="PTHR11758">
    <property type="entry name" value="40S RIBOSOMAL PROTEIN S15A"/>
    <property type="match status" value="1"/>
</dbReference>
<dbReference type="Pfam" id="PF00410">
    <property type="entry name" value="Ribosomal_S8"/>
    <property type="match status" value="1"/>
</dbReference>
<dbReference type="SUPFAM" id="SSF56047">
    <property type="entry name" value="Ribosomal protein S8"/>
    <property type="match status" value="1"/>
</dbReference>
<dbReference type="PROSITE" id="PS00053">
    <property type="entry name" value="RIBOSOMAL_S8"/>
    <property type="match status" value="1"/>
</dbReference>
<reference key="1">
    <citation type="journal article" date="2006" name="BMC Genomics">
        <title>The genome of the square archaeon Haloquadratum walsbyi: life at the limits of water activity.</title>
        <authorList>
            <person name="Bolhuis H."/>
            <person name="Palm P."/>
            <person name="Wende A."/>
            <person name="Falb M."/>
            <person name="Rampp M."/>
            <person name="Rodriguez-Valera F."/>
            <person name="Pfeiffer F."/>
            <person name="Oesterhelt D."/>
        </authorList>
    </citation>
    <scope>NUCLEOTIDE SEQUENCE [LARGE SCALE GENOMIC DNA]</scope>
    <source>
        <strain>DSM 16790 / HBSQ001</strain>
    </source>
</reference>
<protein>
    <recommendedName>
        <fullName evidence="1">Small ribosomal subunit protein uS8</fullName>
    </recommendedName>
    <alternativeName>
        <fullName evidence="2">30S ribosomal protein S8</fullName>
    </alternativeName>
</protein>
<comment type="function">
    <text evidence="1">One of the primary rRNA binding proteins, it binds directly to 16S rRNA central domain where it helps coordinate assembly of the platform of the 30S subunit.</text>
</comment>
<comment type="subunit">
    <text evidence="1">Part of the 30S ribosomal subunit.</text>
</comment>
<comment type="similarity">
    <text evidence="1">Belongs to the universal ribosomal protein uS8 family.</text>
</comment>
<feature type="chain" id="PRO_0000290965" description="Small ribosomal subunit protein uS8">
    <location>
        <begin position="1"/>
        <end position="130"/>
    </location>
</feature>
<organism>
    <name type="scientific">Haloquadratum walsbyi (strain DSM 16790 / HBSQ001)</name>
    <dbReference type="NCBI Taxonomy" id="362976"/>
    <lineage>
        <taxon>Archaea</taxon>
        <taxon>Methanobacteriati</taxon>
        <taxon>Methanobacteriota</taxon>
        <taxon>Stenosarchaea group</taxon>
        <taxon>Halobacteria</taxon>
        <taxon>Halobacteriales</taxon>
        <taxon>Haloferacaceae</taxon>
        <taxon>Haloquadratum</taxon>
    </lineage>
</organism>
<proteinExistence type="inferred from homology"/>
<accession>Q18GG4</accession>
<gene>
    <name evidence="1" type="primary">rps8</name>
    <name type="ordered locus">HQ_2827A</name>
</gene>
<evidence type="ECO:0000255" key="1">
    <source>
        <dbReference type="HAMAP-Rule" id="MF_01302"/>
    </source>
</evidence>
<evidence type="ECO:0000305" key="2"/>
<sequence>MTGNDPLANALSGVDNAESVGHLSHEIQPASNVIGSVLEVFYDRGYINGFEFVDDGKAGRFEVELSGGINECGAVKPRYSAGADEFERWEKRYLPARDYGALIVTTSHGVMSHYEARETGIGGQVIAYVY</sequence>
<keyword id="KW-1185">Reference proteome</keyword>
<keyword id="KW-0687">Ribonucleoprotein</keyword>
<keyword id="KW-0689">Ribosomal protein</keyword>
<keyword id="KW-0694">RNA-binding</keyword>
<keyword id="KW-0699">rRNA-binding</keyword>
<name>RS8_HALWD</name>